<sequence length="424" mass="45925">MQAATSCDLKFRSTDPTSRNKCFSHAIPKRVAVTCGYRSESFSFPNGVSVSRSDWQSSCAILSSKVASVENTGGLADKIAAVNGHTNGSVNLGLVAVESTNGKLAPAQPLTITDLSPAPLHGSSLRVAYQGVPGAYSEAAAGKAYPNCDAIPCDQFDVAFQAVELWIADRAVLPVENSLGGSIHRNYDLLLRHRLHIVGEVQIPVHHCLLALPGVRTDCVSRVISHPQALAQTEHSLDVLTPHAAREAFHDTAAAAEYISANDLHDTAAVASARAAELYNLQILADGIQDDPGNVTRFLMLAREPIIPRTDRPFKTSIVFAAQEHKGTSVLFKVLSAFAFRDISLTKIESRPHHNRPLRVVGDGSFGTSKNFEYMFYVDFEASMAEPRAQNALAEVQEYTSFLRVLGSYPMDMTPWSMTSTEEA</sequence>
<dbReference type="EC" id="4.2.1.91" evidence="4"/>
<dbReference type="EMBL" id="DQ411467">
    <property type="protein sequence ID" value="ABD67753.1"/>
    <property type="molecule type" value="mRNA"/>
</dbReference>
<dbReference type="EMBL" id="AC002534">
    <property type="protein sequence ID" value="AAB70035.1"/>
    <property type="molecule type" value="Genomic_DNA"/>
</dbReference>
<dbReference type="EMBL" id="CP002686">
    <property type="protein sequence ID" value="AEE77939.1"/>
    <property type="molecule type" value="Genomic_DNA"/>
</dbReference>
<dbReference type="EMBL" id="AY062692">
    <property type="protein sequence ID" value="AAL32770.1"/>
    <property type="molecule type" value="mRNA"/>
</dbReference>
<dbReference type="EMBL" id="BT008862">
    <property type="protein sequence ID" value="AAP68301.1"/>
    <property type="molecule type" value="mRNA"/>
</dbReference>
<dbReference type="RefSeq" id="NP_190058.1">
    <property type="nucleotide sequence ID" value="NM_114340.4"/>
</dbReference>
<dbReference type="SMR" id="O22241"/>
<dbReference type="BioGRID" id="8921">
    <property type="interactions" value="10"/>
</dbReference>
<dbReference type="FunCoup" id="O22241">
    <property type="interactions" value="259"/>
</dbReference>
<dbReference type="IntAct" id="O22241">
    <property type="interactions" value="13"/>
</dbReference>
<dbReference type="STRING" id="3702.O22241"/>
<dbReference type="GlyGen" id="O22241">
    <property type="glycosylation" value="1 site"/>
</dbReference>
<dbReference type="PaxDb" id="3702-AT3G44720.1"/>
<dbReference type="ProteomicsDB" id="246959"/>
<dbReference type="EnsemblPlants" id="AT3G44720.1">
    <property type="protein sequence ID" value="AT3G44720.1"/>
    <property type="gene ID" value="AT3G44720"/>
</dbReference>
<dbReference type="GeneID" id="823601"/>
<dbReference type="Gramene" id="AT3G44720.1">
    <property type="protein sequence ID" value="AT3G44720.1"/>
    <property type="gene ID" value="AT3G44720"/>
</dbReference>
<dbReference type="KEGG" id="ath:AT3G44720"/>
<dbReference type="Araport" id="AT3G44720"/>
<dbReference type="TAIR" id="AT3G44720">
    <property type="gene designation" value="ADT4"/>
</dbReference>
<dbReference type="eggNOG" id="KOG2797">
    <property type="taxonomic scope" value="Eukaryota"/>
</dbReference>
<dbReference type="HOGENOM" id="CLU_035008_4_1_1"/>
<dbReference type="InParanoid" id="O22241"/>
<dbReference type="OMA" id="SKNFEYM"/>
<dbReference type="PhylomeDB" id="O22241"/>
<dbReference type="BioCyc" id="ARA:AT3G44720-MONOMER"/>
<dbReference type="BRENDA" id="4.2.1.91">
    <property type="organism ID" value="399"/>
</dbReference>
<dbReference type="SABIO-RK" id="O22241"/>
<dbReference type="UniPathway" id="UPA00121">
    <property type="reaction ID" value="UER00344"/>
</dbReference>
<dbReference type="PRO" id="PR:O22241"/>
<dbReference type="Proteomes" id="UP000006548">
    <property type="component" value="Chromosome 3"/>
</dbReference>
<dbReference type="ExpressionAtlas" id="O22241">
    <property type="expression patterns" value="baseline and differential"/>
</dbReference>
<dbReference type="GO" id="GO:0009507">
    <property type="term" value="C:chloroplast"/>
    <property type="evidence" value="ECO:0000314"/>
    <property type="project" value="TAIR"/>
</dbReference>
<dbReference type="GO" id="GO:0009570">
    <property type="term" value="C:chloroplast stroma"/>
    <property type="evidence" value="ECO:0007669"/>
    <property type="project" value="UniProtKB-SubCell"/>
</dbReference>
<dbReference type="GO" id="GO:0047769">
    <property type="term" value="F:arogenate dehydratase activity"/>
    <property type="evidence" value="ECO:0000314"/>
    <property type="project" value="TAIR"/>
</dbReference>
<dbReference type="GO" id="GO:0004664">
    <property type="term" value="F:prephenate dehydratase activity"/>
    <property type="evidence" value="ECO:0007669"/>
    <property type="project" value="InterPro"/>
</dbReference>
<dbReference type="GO" id="GO:0006952">
    <property type="term" value="P:defense response"/>
    <property type="evidence" value="ECO:0000270"/>
    <property type="project" value="TAIR"/>
</dbReference>
<dbReference type="GO" id="GO:0009094">
    <property type="term" value="P:L-phenylalanine biosynthetic process"/>
    <property type="evidence" value="ECO:0007669"/>
    <property type="project" value="UniProtKB-UniPathway"/>
</dbReference>
<dbReference type="CDD" id="cd04905">
    <property type="entry name" value="ACT_CM-PDT"/>
    <property type="match status" value="1"/>
</dbReference>
<dbReference type="CDD" id="cd13631">
    <property type="entry name" value="PBP2_Ct-PDT_like"/>
    <property type="match status" value="1"/>
</dbReference>
<dbReference type="FunFam" id="3.30.70.260:FF:000019">
    <property type="entry name" value="Arogenate dehydratase"/>
    <property type="match status" value="1"/>
</dbReference>
<dbReference type="FunFam" id="3.40.190.10:FF:000028">
    <property type="entry name" value="Arogenate dehydratase"/>
    <property type="match status" value="1"/>
</dbReference>
<dbReference type="FunFam" id="3.40.190.10:FF:000031">
    <property type="entry name" value="Arogenate dehydratase"/>
    <property type="match status" value="1"/>
</dbReference>
<dbReference type="Gene3D" id="3.30.70.260">
    <property type="match status" value="1"/>
</dbReference>
<dbReference type="Gene3D" id="3.40.190.10">
    <property type="entry name" value="Periplasmic binding protein-like II"/>
    <property type="match status" value="2"/>
</dbReference>
<dbReference type="InterPro" id="IPR045865">
    <property type="entry name" value="ACT-like_dom_sf"/>
</dbReference>
<dbReference type="InterPro" id="IPR002912">
    <property type="entry name" value="ACT_dom"/>
</dbReference>
<dbReference type="InterPro" id="IPR001086">
    <property type="entry name" value="Preph_deHydtase"/>
</dbReference>
<dbReference type="InterPro" id="IPR018528">
    <property type="entry name" value="Preph_deHydtase_CS"/>
</dbReference>
<dbReference type="PANTHER" id="PTHR21022:SF25">
    <property type="entry name" value="AROGENATE DEHYDRATASE 4, CHLOROPLASTIC"/>
    <property type="match status" value="1"/>
</dbReference>
<dbReference type="PANTHER" id="PTHR21022">
    <property type="entry name" value="PREPHENATE DEHYDRATASE P PROTEIN"/>
    <property type="match status" value="1"/>
</dbReference>
<dbReference type="Pfam" id="PF00800">
    <property type="entry name" value="PDT"/>
    <property type="match status" value="1"/>
</dbReference>
<dbReference type="SUPFAM" id="SSF55021">
    <property type="entry name" value="ACT-like"/>
    <property type="match status" value="1"/>
</dbReference>
<dbReference type="SUPFAM" id="SSF53850">
    <property type="entry name" value="Periplasmic binding protein-like II"/>
    <property type="match status" value="1"/>
</dbReference>
<dbReference type="PROSITE" id="PS51671">
    <property type="entry name" value="ACT"/>
    <property type="match status" value="1"/>
</dbReference>
<dbReference type="PROSITE" id="PS00857">
    <property type="entry name" value="PREPHENATE_DEHYDR_1"/>
    <property type="match status" value="1"/>
</dbReference>
<dbReference type="PROSITE" id="PS00858">
    <property type="entry name" value="PREPHENATE_DEHYDR_2"/>
    <property type="match status" value="1"/>
</dbReference>
<dbReference type="PROSITE" id="PS51171">
    <property type="entry name" value="PREPHENATE_DEHYDR_3"/>
    <property type="match status" value="1"/>
</dbReference>
<accession>O22241</accession>
<proteinExistence type="evidence at protein level"/>
<evidence type="ECO:0000255" key="1"/>
<evidence type="ECO:0000255" key="2">
    <source>
        <dbReference type="PROSITE-ProRule" id="PRU00517"/>
    </source>
</evidence>
<evidence type="ECO:0000255" key="3">
    <source>
        <dbReference type="PROSITE-ProRule" id="PRU01007"/>
    </source>
</evidence>
<evidence type="ECO:0000269" key="4">
    <source>
    </source>
</evidence>
<evidence type="ECO:0000269" key="5">
    <source>
    </source>
</evidence>
<evidence type="ECO:0000303" key="6">
    <source>
    </source>
</evidence>
<evidence type="ECO:0000305" key="7"/>
<evidence type="ECO:0000312" key="8">
    <source>
        <dbReference type="Araport" id="AT3G44720"/>
    </source>
</evidence>
<evidence type="ECO:0000312" key="9">
    <source>
        <dbReference type="EMBL" id="AAB70035.1"/>
    </source>
</evidence>
<name>AROD4_ARATH</name>
<organism>
    <name type="scientific">Arabidopsis thaliana</name>
    <name type="common">Mouse-ear cress</name>
    <dbReference type="NCBI Taxonomy" id="3702"/>
    <lineage>
        <taxon>Eukaryota</taxon>
        <taxon>Viridiplantae</taxon>
        <taxon>Streptophyta</taxon>
        <taxon>Embryophyta</taxon>
        <taxon>Tracheophyta</taxon>
        <taxon>Spermatophyta</taxon>
        <taxon>Magnoliopsida</taxon>
        <taxon>eudicotyledons</taxon>
        <taxon>Gunneridae</taxon>
        <taxon>Pentapetalae</taxon>
        <taxon>rosids</taxon>
        <taxon>malvids</taxon>
        <taxon>Brassicales</taxon>
        <taxon>Brassicaceae</taxon>
        <taxon>Camelineae</taxon>
        <taxon>Arabidopsis</taxon>
    </lineage>
</organism>
<gene>
    <name evidence="6" type="primary">ADT4</name>
    <name evidence="8" type="ordered locus">At3g44720</name>
    <name evidence="9" type="ORF">T32N15.11</name>
</gene>
<reference key="1">
    <citation type="submission" date="2006-02" db="EMBL/GenBank/DDBJ databases">
        <authorList>
            <person name="Matringe M."/>
            <person name="Grisollet D."/>
            <person name="Rippert P."/>
        </authorList>
    </citation>
    <scope>NUCLEOTIDE SEQUENCE [MRNA]</scope>
    <source>
        <strain>cv. Columbia</strain>
    </source>
</reference>
<reference key="2">
    <citation type="journal article" date="2000" name="Nature">
        <title>Sequence and analysis of chromosome 3 of the plant Arabidopsis thaliana.</title>
        <authorList>
            <person name="Salanoubat M."/>
            <person name="Lemcke K."/>
            <person name="Rieger M."/>
            <person name="Ansorge W."/>
            <person name="Unseld M."/>
            <person name="Fartmann B."/>
            <person name="Valle G."/>
            <person name="Bloecker H."/>
            <person name="Perez-Alonso M."/>
            <person name="Obermaier B."/>
            <person name="Delseny M."/>
            <person name="Boutry M."/>
            <person name="Grivell L.A."/>
            <person name="Mache R."/>
            <person name="Puigdomenech P."/>
            <person name="De Simone V."/>
            <person name="Choisne N."/>
            <person name="Artiguenave F."/>
            <person name="Robert C."/>
            <person name="Brottier P."/>
            <person name="Wincker P."/>
            <person name="Cattolico L."/>
            <person name="Weissenbach J."/>
            <person name="Saurin W."/>
            <person name="Quetier F."/>
            <person name="Schaefer M."/>
            <person name="Mueller-Auer S."/>
            <person name="Gabel C."/>
            <person name="Fuchs M."/>
            <person name="Benes V."/>
            <person name="Wurmbach E."/>
            <person name="Drzonek H."/>
            <person name="Erfle H."/>
            <person name="Jordan N."/>
            <person name="Bangert S."/>
            <person name="Wiedelmann R."/>
            <person name="Kranz H."/>
            <person name="Voss H."/>
            <person name="Holland R."/>
            <person name="Brandt P."/>
            <person name="Nyakatura G."/>
            <person name="Vezzi A."/>
            <person name="D'Angelo M."/>
            <person name="Pallavicini A."/>
            <person name="Toppo S."/>
            <person name="Simionati B."/>
            <person name="Conrad A."/>
            <person name="Hornischer K."/>
            <person name="Kauer G."/>
            <person name="Loehnert T.-H."/>
            <person name="Nordsiek G."/>
            <person name="Reichelt J."/>
            <person name="Scharfe M."/>
            <person name="Schoen O."/>
            <person name="Bargues M."/>
            <person name="Terol J."/>
            <person name="Climent J."/>
            <person name="Navarro P."/>
            <person name="Collado C."/>
            <person name="Perez-Perez A."/>
            <person name="Ottenwaelder B."/>
            <person name="Duchemin D."/>
            <person name="Cooke R."/>
            <person name="Laudie M."/>
            <person name="Berger-Llauro C."/>
            <person name="Purnelle B."/>
            <person name="Masuy D."/>
            <person name="de Haan M."/>
            <person name="Maarse A.C."/>
            <person name="Alcaraz J.-P."/>
            <person name="Cottet A."/>
            <person name="Casacuberta E."/>
            <person name="Monfort A."/>
            <person name="Argiriou A."/>
            <person name="Flores M."/>
            <person name="Liguori R."/>
            <person name="Vitale D."/>
            <person name="Mannhaupt G."/>
            <person name="Haase D."/>
            <person name="Schoof H."/>
            <person name="Rudd S."/>
            <person name="Zaccaria P."/>
            <person name="Mewes H.-W."/>
            <person name="Mayer K.F.X."/>
            <person name="Kaul S."/>
            <person name="Town C.D."/>
            <person name="Koo H.L."/>
            <person name="Tallon L.J."/>
            <person name="Jenkins J."/>
            <person name="Rooney T."/>
            <person name="Rizzo M."/>
            <person name="Walts A."/>
            <person name="Utterback T."/>
            <person name="Fujii C.Y."/>
            <person name="Shea T.P."/>
            <person name="Creasy T.H."/>
            <person name="Haas B."/>
            <person name="Maiti R."/>
            <person name="Wu D."/>
            <person name="Peterson J."/>
            <person name="Van Aken S."/>
            <person name="Pai G."/>
            <person name="Militscher J."/>
            <person name="Sellers P."/>
            <person name="Gill J.E."/>
            <person name="Feldblyum T.V."/>
            <person name="Preuss D."/>
            <person name="Lin X."/>
            <person name="Nierman W.C."/>
            <person name="Salzberg S.L."/>
            <person name="White O."/>
            <person name="Venter J.C."/>
            <person name="Fraser C.M."/>
            <person name="Kaneko T."/>
            <person name="Nakamura Y."/>
            <person name="Sato S."/>
            <person name="Kato T."/>
            <person name="Asamizu E."/>
            <person name="Sasamoto S."/>
            <person name="Kimura T."/>
            <person name="Idesawa K."/>
            <person name="Kawashima K."/>
            <person name="Kishida Y."/>
            <person name="Kiyokawa C."/>
            <person name="Kohara M."/>
            <person name="Matsumoto M."/>
            <person name="Matsuno A."/>
            <person name="Muraki A."/>
            <person name="Nakayama S."/>
            <person name="Nakazaki N."/>
            <person name="Shinpo S."/>
            <person name="Takeuchi C."/>
            <person name="Wada T."/>
            <person name="Watanabe A."/>
            <person name="Yamada M."/>
            <person name="Yasuda M."/>
            <person name="Tabata S."/>
        </authorList>
    </citation>
    <scope>NUCLEOTIDE SEQUENCE [LARGE SCALE GENOMIC DNA]</scope>
    <source>
        <strain>cv. Columbia</strain>
    </source>
</reference>
<reference key="3">
    <citation type="journal article" date="2017" name="Plant J.">
        <title>Araport11: a complete reannotation of the Arabidopsis thaliana reference genome.</title>
        <authorList>
            <person name="Cheng C.Y."/>
            <person name="Krishnakumar V."/>
            <person name="Chan A.P."/>
            <person name="Thibaud-Nissen F."/>
            <person name="Schobel S."/>
            <person name="Town C.D."/>
        </authorList>
    </citation>
    <scope>GENOME REANNOTATION</scope>
    <source>
        <strain>cv. Columbia</strain>
    </source>
</reference>
<reference key="4">
    <citation type="journal article" date="2003" name="Science">
        <title>Empirical analysis of transcriptional activity in the Arabidopsis genome.</title>
        <authorList>
            <person name="Yamada K."/>
            <person name="Lim J."/>
            <person name="Dale J.M."/>
            <person name="Chen H."/>
            <person name="Shinn P."/>
            <person name="Palm C.J."/>
            <person name="Southwick A.M."/>
            <person name="Wu H.C."/>
            <person name="Kim C.J."/>
            <person name="Nguyen M."/>
            <person name="Pham P.K."/>
            <person name="Cheuk R.F."/>
            <person name="Karlin-Newmann G."/>
            <person name="Liu S.X."/>
            <person name="Lam B."/>
            <person name="Sakano H."/>
            <person name="Wu T."/>
            <person name="Yu G."/>
            <person name="Miranda M."/>
            <person name="Quach H.L."/>
            <person name="Tripp M."/>
            <person name="Chang C.H."/>
            <person name="Lee J.M."/>
            <person name="Toriumi M.J."/>
            <person name="Chan M.M."/>
            <person name="Tang C.C."/>
            <person name="Onodera C.S."/>
            <person name="Deng J.M."/>
            <person name="Akiyama K."/>
            <person name="Ansari Y."/>
            <person name="Arakawa T."/>
            <person name="Banh J."/>
            <person name="Banno F."/>
            <person name="Bowser L."/>
            <person name="Brooks S.Y."/>
            <person name="Carninci P."/>
            <person name="Chao Q."/>
            <person name="Choy N."/>
            <person name="Enju A."/>
            <person name="Goldsmith A.D."/>
            <person name="Gurjal M."/>
            <person name="Hansen N.F."/>
            <person name="Hayashizaki Y."/>
            <person name="Johnson-Hopson C."/>
            <person name="Hsuan V.W."/>
            <person name="Iida K."/>
            <person name="Karnes M."/>
            <person name="Khan S."/>
            <person name="Koesema E."/>
            <person name="Ishida J."/>
            <person name="Jiang P.X."/>
            <person name="Jones T."/>
            <person name="Kawai J."/>
            <person name="Kamiya A."/>
            <person name="Meyers C."/>
            <person name="Nakajima M."/>
            <person name="Narusaka M."/>
            <person name="Seki M."/>
            <person name="Sakurai T."/>
            <person name="Satou M."/>
            <person name="Tamse R."/>
            <person name="Vaysberg M."/>
            <person name="Wallender E.K."/>
            <person name="Wong C."/>
            <person name="Yamamura Y."/>
            <person name="Yuan S."/>
            <person name="Shinozaki K."/>
            <person name="Davis R.W."/>
            <person name="Theologis A."/>
            <person name="Ecker J.R."/>
        </authorList>
    </citation>
    <scope>NUCLEOTIDE SEQUENCE [LARGE SCALE MRNA]</scope>
    <source>
        <strain>cv. Columbia</strain>
    </source>
</reference>
<reference key="5">
    <citation type="journal article" date="2007" name="J. Biol. Chem.">
        <title>Phenylalanine biosynthesis in Arabidopsis thaliana. Identification and characterization of arogenate dehydratases.</title>
        <authorList>
            <person name="Cho M.-H."/>
            <person name="Corea O.R.A."/>
            <person name="Yang H."/>
            <person name="Bedgar D.L."/>
            <person name="Laskar D.D."/>
            <person name="Anterola A.M."/>
            <person name="Moog-Anterola F.A."/>
            <person name="Hood R.L."/>
            <person name="Kohalmi S.E."/>
            <person name="Bernards M.A."/>
            <person name="Kang C."/>
            <person name="Davin L.B."/>
            <person name="Lewis N.G."/>
        </authorList>
    </citation>
    <scope>FUNCTION</scope>
    <scope>CATALYTIC ACTIVITY</scope>
    <scope>TISSUE SPECIFICITY</scope>
    <scope>BIOPHYSICOCHEMICAL PROPERTIES</scope>
</reference>
<reference key="6">
    <citation type="journal article" date="2009" name="Plant Physiol.">
        <title>Tyrosine and phenylalanine are synthesized within the plastids in Arabidopsis.</title>
        <authorList>
            <person name="Rippert P."/>
            <person name="Puyaubert J."/>
            <person name="Grisollet D."/>
            <person name="Derrier L."/>
            <person name="Matringe M."/>
        </authorList>
    </citation>
    <scope>SUBCELLULAR LOCATION</scope>
</reference>
<keyword id="KW-0028">Amino-acid biosynthesis</keyword>
<keyword id="KW-0057">Aromatic amino acid biosynthesis</keyword>
<keyword id="KW-0150">Chloroplast</keyword>
<keyword id="KW-0456">Lyase</keyword>
<keyword id="KW-0584">Phenylalanine biosynthesis</keyword>
<keyword id="KW-0934">Plastid</keyword>
<keyword id="KW-1185">Reference proteome</keyword>
<keyword id="KW-0809">Transit peptide</keyword>
<comment type="function">
    <text evidence="4">Converts the prephenate produced from the shikimate-chorismate pathway into phenylalanine.</text>
</comment>
<comment type="catalytic activity">
    <reaction evidence="4">
        <text>L-arogenate + H(+) = L-phenylalanine + CO2 + H2O</text>
        <dbReference type="Rhea" id="RHEA:12536"/>
        <dbReference type="ChEBI" id="CHEBI:15377"/>
        <dbReference type="ChEBI" id="CHEBI:15378"/>
        <dbReference type="ChEBI" id="CHEBI:16526"/>
        <dbReference type="ChEBI" id="CHEBI:58095"/>
        <dbReference type="ChEBI" id="CHEBI:58180"/>
        <dbReference type="EC" id="4.2.1.91"/>
    </reaction>
    <physiologicalReaction direction="left-to-right" evidence="4">
        <dbReference type="Rhea" id="RHEA:12537"/>
    </physiologicalReaction>
</comment>
<comment type="biophysicochemical properties">
    <kinetics>
        <KM evidence="4">10.08 mM for arogenate</KM>
        <Vmax evidence="4">52.32 pmol/sec/ug enzyme with arogenate as substrate</Vmax>
    </kinetics>
</comment>
<comment type="pathway">
    <text evidence="7">Amino-acid biosynthesis; L-phenylalanine biosynthesis; L-phenylalanine from L-arogenate: step 1/1.</text>
</comment>
<comment type="subcellular location">
    <subcellularLocation>
        <location evidence="5">Plastid</location>
        <location evidence="5">Chloroplast stroma</location>
    </subcellularLocation>
</comment>
<comment type="tissue specificity">
    <text evidence="4">Expressed in roots, leaves, stems, flowers and siliques. More abundant in stems and roots.</text>
</comment>
<comment type="miscellaneous">
    <text evidence="4">Has no detectable prehenate dehydratase activity.</text>
</comment>
<protein>
    <recommendedName>
        <fullName evidence="6">Arogenate dehydratase 4, chloroplastic</fullName>
        <shortName evidence="6">AtADT4</shortName>
        <ecNumber evidence="4">4.2.1.91</ecNumber>
    </recommendedName>
</protein>
<feature type="transit peptide" description="Chloroplast" evidence="1">
    <location>
        <begin position="1"/>
        <end position="34"/>
    </location>
</feature>
<feature type="chain" id="PRO_0000373793" description="Arogenate dehydratase 4, chloroplastic">
    <location>
        <begin position="35"/>
        <end position="424"/>
    </location>
</feature>
<feature type="domain" description="Prephenate dehydratase" evidence="2">
    <location>
        <begin position="126"/>
        <end position="303"/>
    </location>
</feature>
<feature type="domain" description="ACT" evidence="3">
    <location>
        <begin position="319"/>
        <end position="410"/>
    </location>
</feature>